<name>GLMS_PSESM</name>
<protein>
    <recommendedName>
        <fullName evidence="1">Glutamine--fructose-6-phosphate aminotransferase [isomerizing]</fullName>
        <ecNumber evidence="1">2.6.1.16</ecNumber>
    </recommendedName>
    <alternativeName>
        <fullName evidence="1">D-fructose-6-phosphate amidotransferase</fullName>
    </alternativeName>
    <alternativeName>
        <fullName evidence="1">GFAT</fullName>
    </alternativeName>
    <alternativeName>
        <fullName evidence="1">Glucosamine-6-phosphate synthase</fullName>
    </alternativeName>
    <alternativeName>
        <fullName evidence="1">Hexosephosphate aminotransferase</fullName>
    </alternativeName>
    <alternativeName>
        <fullName evidence="1">L-glutamine--D-fructose-6-phosphate amidotransferase</fullName>
    </alternativeName>
</protein>
<dbReference type="EC" id="2.6.1.16" evidence="1"/>
<dbReference type="EMBL" id="AE016853">
    <property type="protein sequence ID" value="AAO59008.1"/>
    <property type="molecule type" value="Genomic_DNA"/>
</dbReference>
<dbReference type="RefSeq" id="NP_795313.1">
    <property type="nucleotide sequence ID" value="NC_004578.1"/>
</dbReference>
<dbReference type="RefSeq" id="WP_011105589.1">
    <property type="nucleotide sequence ID" value="NC_004578.1"/>
</dbReference>
<dbReference type="SMR" id="Q87TT8"/>
<dbReference type="STRING" id="223283.PSPTO_5595"/>
<dbReference type="GeneID" id="1187287"/>
<dbReference type="KEGG" id="pst:PSPTO_5595"/>
<dbReference type="PATRIC" id="fig|223283.9.peg.5732"/>
<dbReference type="eggNOG" id="COG0449">
    <property type="taxonomic scope" value="Bacteria"/>
</dbReference>
<dbReference type="HOGENOM" id="CLU_012520_5_2_6"/>
<dbReference type="OrthoDB" id="9761808at2"/>
<dbReference type="PhylomeDB" id="Q87TT8"/>
<dbReference type="Proteomes" id="UP000002515">
    <property type="component" value="Chromosome"/>
</dbReference>
<dbReference type="GO" id="GO:0005829">
    <property type="term" value="C:cytosol"/>
    <property type="evidence" value="ECO:0007669"/>
    <property type="project" value="TreeGrafter"/>
</dbReference>
<dbReference type="GO" id="GO:0097367">
    <property type="term" value="F:carbohydrate derivative binding"/>
    <property type="evidence" value="ECO:0007669"/>
    <property type="project" value="InterPro"/>
</dbReference>
<dbReference type="GO" id="GO:0004360">
    <property type="term" value="F:glutamine-fructose-6-phosphate transaminase (isomerizing) activity"/>
    <property type="evidence" value="ECO:0007669"/>
    <property type="project" value="UniProtKB-UniRule"/>
</dbReference>
<dbReference type="GO" id="GO:0005975">
    <property type="term" value="P:carbohydrate metabolic process"/>
    <property type="evidence" value="ECO:0007669"/>
    <property type="project" value="UniProtKB-UniRule"/>
</dbReference>
<dbReference type="GO" id="GO:0006002">
    <property type="term" value="P:fructose 6-phosphate metabolic process"/>
    <property type="evidence" value="ECO:0007669"/>
    <property type="project" value="TreeGrafter"/>
</dbReference>
<dbReference type="GO" id="GO:0006487">
    <property type="term" value="P:protein N-linked glycosylation"/>
    <property type="evidence" value="ECO:0007669"/>
    <property type="project" value="TreeGrafter"/>
</dbReference>
<dbReference type="GO" id="GO:0006047">
    <property type="term" value="P:UDP-N-acetylglucosamine metabolic process"/>
    <property type="evidence" value="ECO:0007669"/>
    <property type="project" value="TreeGrafter"/>
</dbReference>
<dbReference type="CDD" id="cd00714">
    <property type="entry name" value="GFAT"/>
    <property type="match status" value="1"/>
</dbReference>
<dbReference type="CDD" id="cd05008">
    <property type="entry name" value="SIS_GlmS_GlmD_1"/>
    <property type="match status" value="1"/>
</dbReference>
<dbReference type="CDD" id="cd05009">
    <property type="entry name" value="SIS_GlmS_GlmD_2"/>
    <property type="match status" value="1"/>
</dbReference>
<dbReference type="FunFam" id="3.40.50.10490:FF:000001">
    <property type="entry name" value="Glutamine--fructose-6-phosphate aminotransferase [isomerizing]"/>
    <property type="match status" value="1"/>
</dbReference>
<dbReference type="FunFam" id="3.40.50.10490:FF:000002">
    <property type="entry name" value="Glutamine--fructose-6-phosphate aminotransferase [isomerizing]"/>
    <property type="match status" value="1"/>
</dbReference>
<dbReference type="FunFam" id="3.60.20.10:FF:000006">
    <property type="entry name" value="Glutamine--fructose-6-phosphate aminotransferase [isomerizing]"/>
    <property type="match status" value="1"/>
</dbReference>
<dbReference type="Gene3D" id="3.40.50.10490">
    <property type="entry name" value="Glucose-6-phosphate isomerase like protein, domain 1"/>
    <property type="match status" value="2"/>
</dbReference>
<dbReference type="Gene3D" id="3.60.20.10">
    <property type="entry name" value="Glutamine Phosphoribosylpyrophosphate, subunit 1, domain 1"/>
    <property type="match status" value="1"/>
</dbReference>
<dbReference type="HAMAP" id="MF_00164">
    <property type="entry name" value="GlmS"/>
    <property type="match status" value="1"/>
</dbReference>
<dbReference type="InterPro" id="IPR017932">
    <property type="entry name" value="GATase_2_dom"/>
</dbReference>
<dbReference type="InterPro" id="IPR005855">
    <property type="entry name" value="GFAT"/>
</dbReference>
<dbReference type="InterPro" id="IPR047084">
    <property type="entry name" value="GFAT_N"/>
</dbReference>
<dbReference type="InterPro" id="IPR035466">
    <property type="entry name" value="GlmS/AgaS_SIS"/>
</dbReference>
<dbReference type="InterPro" id="IPR035490">
    <property type="entry name" value="GlmS/FrlB_SIS"/>
</dbReference>
<dbReference type="InterPro" id="IPR029055">
    <property type="entry name" value="Ntn_hydrolases_N"/>
</dbReference>
<dbReference type="InterPro" id="IPR001347">
    <property type="entry name" value="SIS_dom"/>
</dbReference>
<dbReference type="InterPro" id="IPR046348">
    <property type="entry name" value="SIS_dom_sf"/>
</dbReference>
<dbReference type="NCBIfam" id="TIGR01135">
    <property type="entry name" value="glmS"/>
    <property type="match status" value="1"/>
</dbReference>
<dbReference type="NCBIfam" id="NF001484">
    <property type="entry name" value="PRK00331.1"/>
    <property type="match status" value="1"/>
</dbReference>
<dbReference type="PANTHER" id="PTHR10937">
    <property type="entry name" value="GLUCOSAMINE--FRUCTOSE-6-PHOSPHATE AMINOTRANSFERASE, ISOMERIZING"/>
    <property type="match status" value="1"/>
</dbReference>
<dbReference type="PANTHER" id="PTHR10937:SF0">
    <property type="entry name" value="GLUTAMINE--FRUCTOSE-6-PHOSPHATE TRANSAMINASE (ISOMERIZING)"/>
    <property type="match status" value="1"/>
</dbReference>
<dbReference type="Pfam" id="PF13522">
    <property type="entry name" value="GATase_6"/>
    <property type="match status" value="1"/>
</dbReference>
<dbReference type="Pfam" id="PF01380">
    <property type="entry name" value="SIS"/>
    <property type="match status" value="2"/>
</dbReference>
<dbReference type="SUPFAM" id="SSF56235">
    <property type="entry name" value="N-terminal nucleophile aminohydrolases (Ntn hydrolases)"/>
    <property type="match status" value="1"/>
</dbReference>
<dbReference type="SUPFAM" id="SSF53697">
    <property type="entry name" value="SIS domain"/>
    <property type="match status" value="1"/>
</dbReference>
<dbReference type="PROSITE" id="PS51278">
    <property type="entry name" value="GATASE_TYPE_2"/>
    <property type="match status" value="1"/>
</dbReference>
<dbReference type="PROSITE" id="PS51464">
    <property type="entry name" value="SIS"/>
    <property type="match status" value="2"/>
</dbReference>
<evidence type="ECO:0000255" key="1">
    <source>
        <dbReference type="HAMAP-Rule" id="MF_00164"/>
    </source>
</evidence>
<organism>
    <name type="scientific">Pseudomonas syringae pv. tomato (strain ATCC BAA-871 / DC3000)</name>
    <dbReference type="NCBI Taxonomy" id="223283"/>
    <lineage>
        <taxon>Bacteria</taxon>
        <taxon>Pseudomonadati</taxon>
        <taxon>Pseudomonadota</taxon>
        <taxon>Gammaproteobacteria</taxon>
        <taxon>Pseudomonadales</taxon>
        <taxon>Pseudomonadaceae</taxon>
        <taxon>Pseudomonas</taxon>
    </lineage>
</organism>
<feature type="initiator methionine" description="Removed" evidence="1">
    <location>
        <position position="1"/>
    </location>
</feature>
<feature type="chain" id="PRO_0000135369" description="Glutamine--fructose-6-phosphate aminotransferase [isomerizing]">
    <location>
        <begin position="2"/>
        <end position="611"/>
    </location>
</feature>
<feature type="domain" description="Glutamine amidotransferase type-2" evidence="1">
    <location>
        <begin position="2"/>
        <end position="219"/>
    </location>
</feature>
<feature type="domain" description="SIS 1" evidence="1">
    <location>
        <begin position="287"/>
        <end position="427"/>
    </location>
</feature>
<feature type="domain" description="SIS 2" evidence="1">
    <location>
        <begin position="460"/>
        <end position="601"/>
    </location>
</feature>
<feature type="active site" description="Nucleophile; for GATase activity" evidence="1">
    <location>
        <position position="2"/>
    </location>
</feature>
<feature type="active site" description="For Fru-6P isomerization activity" evidence="1">
    <location>
        <position position="606"/>
    </location>
</feature>
<accession>Q87TT8</accession>
<sequence length="611" mass="66433">MCGIVGAVAERNITAILLEGLKRLEYRGYDSAGVAVFTNEGVLERRRRSGKVSELEQALAGEPLIGRLGIAHTRWATHGAPCERNAHPHFSADELAVVHNGIIENHEALREQLKSLGYVFVSDTDTEVIVHLLHHKLKDTPDLAVALKSAVKELHGAYGLAVINAAQPDRLLAARSGSPLVIGVGMGENFLASDQLALRQVTDRFMYLEEGDIAEIRRDSVQIWTVDGLPVVREVVQYHEGAEAADKGEYRHFMLKEIHEQPKVVQRTLEGRLGQHQVLVHAFGPQAAELFAKVRNVQIVACGTSYHAGMVARYWLEGLAGIPCQVEVASEFRYRKVVVQPDTLFVSISQSGETADTLAALRNAKELGFLASLAICNVGISSLVRESDLTLLTQAGPEIGVASTKAFTTQLVALLLLTLSLGQVKGSLEEGVEAQLVEELRRLPTRLGEALAMDGTIEKVAELFAEKHHTLFLGRGAQFPVAMEGALKLKEISYIHAEAYPAGELKHGPLALVDADMPVVTVAPNNELLEKLKSNLQEVRARGGELIVFADEQAGMKNGEGTHVIAMPHIIDALAPILYTIPLQLLSYYVAVLKGTDVDQPRNLAKSVTVE</sequence>
<keyword id="KW-0032">Aminotransferase</keyword>
<keyword id="KW-0963">Cytoplasm</keyword>
<keyword id="KW-0315">Glutamine amidotransferase</keyword>
<keyword id="KW-1185">Reference proteome</keyword>
<keyword id="KW-0677">Repeat</keyword>
<keyword id="KW-0808">Transferase</keyword>
<proteinExistence type="inferred from homology"/>
<reference key="1">
    <citation type="journal article" date="2003" name="Proc. Natl. Acad. Sci. U.S.A.">
        <title>The complete genome sequence of the Arabidopsis and tomato pathogen Pseudomonas syringae pv. tomato DC3000.</title>
        <authorList>
            <person name="Buell C.R."/>
            <person name="Joardar V."/>
            <person name="Lindeberg M."/>
            <person name="Selengut J."/>
            <person name="Paulsen I.T."/>
            <person name="Gwinn M.L."/>
            <person name="Dodson R.J."/>
            <person name="DeBoy R.T."/>
            <person name="Durkin A.S."/>
            <person name="Kolonay J.F."/>
            <person name="Madupu R."/>
            <person name="Daugherty S.C."/>
            <person name="Brinkac L.M."/>
            <person name="Beanan M.J."/>
            <person name="Haft D.H."/>
            <person name="Nelson W.C."/>
            <person name="Davidsen T.M."/>
            <person name="Zafar N."/>
            <person name="Zhou L."/>
            <person name="Liu J."/>
            <person name="Yuan Q."/>
            <person name="Khouri H.M."/>
            <person name="Fedorova N.B."/>
            <person name="Tran B."/>
            <person name="Russell D."/>
            <person name="Berry K.J."/>
            <person name="Utterback T.R."/>
            <person name="Van Aken S.E."/>
            <person name="Feldblyum T.V."/>
            <person name="D'Ascenzo M."/>
            <person name="Deng W.-L."/>
            <person name="Ramos A.R."/>
            <person name="Alfano J.R."/>
            <person name="Cartinhour S."/>
            <person name="Chatterjee A.K."/>
            <person name="Delaney T.P."/>
            <person name="Lazarowitz S.G."/>
            <person name="Martin G.B."/>
            <person name="Schneider D.J."/>
            <person name="Tang X."/>
            <person name="Bender C.L."/>
            <person name="White O."/>
            <person name="Fraser C.M."/>
            <person name="Collmer A."/>
        </authorList>
    </citation>
    <scope>NUCLEOTIDE SEQUENCE [LARGE SCALE GENOMIC DNA]</scope>
    <source>
        <strain>ATCC BAA-871 / DC3000</strain>
    </source>
</reference>
<comment type="function">
    <text evidence="1">Catalyzes the first step in hexosamine metabolism, converting fructose-6P into glucosamine-6P using glutamine as a nitrogen source.</text>
</comment>
<comment type="catalytic activity">
    <reaction evidence="1">
        <text>D-fructose 6-phosphate + L-glutamine = D-glucosamine 6-phosphate + L-glutamate</text>
        <dbReference type="Rhea" id="RHEA:13237"/>
        <dbReference type="ChEBI" id="CHEBI:29985"/>
        <dbReference type="ChEBI" id="CHEBI:58359"/>
        <dbReference type="ChEBI" id="CHEBI:58725"/>
        <dbReference type="ChEBI" id="CHEBI:61527"/>
        <dbReference type="EC" id="2.6.1.16"/>
    </reaction>
</comment>
<comment type="subunit">
    <text evidence="1">Homodimer.</text>
</comment>
<comment type="subcellular location">
    <subcellularLocation>
        <location evidence="1">Cytoplasm</location>
    </subcellularLocation>
</comment>
<gene>
    <name evidence="1" type="primary">glmS</name>
    <name type="ordered locus">PSPTO_5595</name>
</gene>